<feature type="chain" id="PRO_0000302213" description="Large ribosomal subunit protein bL36">
    <location>
        <begin position="1"/>
        <end position="37"/>
    </location>
</feature>
<proteinExistence type="inferred from homology"/>
<evidence type="ECO:0000255" key="1">
    <source>
        <dbReference type="HAMAP-Rule" id="MF_00251"/>
    </source>
</evidence>
<evidence type="ECO:0000305" key="2"/>
<comment type="similarity">
    <text evidence="1">Belongs to the bacterial ribosomal protein bL36 family.</text>
</comment>
<sequence>MKVRASVKKMCRNCKIVKREGVVRVLCSDPKHKQRQG</sequence>
<protein>
    <recommendedName>
        <fullName evidence="1">Large ribosomal subunit protein bL36</fullName>
    </recommendedName>
    <alternativeName>
        <fullName evidence="2">50S ribosomal protein L36</fullName>
    </alternativeName>
</protein>
<keyword id="KW-0687">Ribonucleoprotein</keyword>
<keyword id="KW-0689">Ribosomal protein</keyword>
<organism>
    <name type="scientific">Histophilus somni (strain 129Pt)</name>
    <name type="common">Haemophilus somnus</name>
    <dbReference type="NCBI Taxonomy" id="205914"/>
    <lineage>
        <taxon>Bacteria</taxon>
        <taxon>Pseudomonadati</taxon>
        <taxon>Pseudomonadota</taxon>
        <taxon>Gammaproteobacteria</taxon>
        <taxon>Pasteurellales</taxon>
        <taxon>Pasteurellaceae</taxon>
        <taxon>Histophilus</taxon>
    </lineage>
</organism>
<dbReference type="EMBL" id="CP000436">
    <property type="protein sequence ID" value="ABI26062.1"/>
    <property type="molecule type" value="Genomic_DNA"/>
</dbReference>
<dbReference type="SMR" id="Q0I141"/>
<dbReference type="KEGG" id="hso:HS_0080a"/>
<dbReference type="eggNOG" id="COG0257">
    <property type="taxonomic scope" value="Bacteria"/>
</dbReference>
<dbReference type="HOGENOM" id="CLU_135723_6_2_6"/>
<dbReference type="GO" id="GO:0005737">
    <property type="term" value="C:cytoplasm"/>
    <property type="evidence" value="ECO:0007669"/>
    <property type="project" value="UniProtKB-ARBA"/>
</dbReference>
<dbReference type="GO" id="GO:1990904">
    <property type="term" value="C:ribonucleoprotein complex"/>
    <property type="evidence" value="ECO:0007669"/>
    <property type="project" value="UniProtKB-KW"/>
</dbReference>
<dbReference type="GO" id="GO:0005840">
    <property type="term" value="C:ribosome"/>
    <property type="evidence" value="ECO:0007669"/>
    <property type="project" value="UniProtKB-KW"/>
</dbReference>
<dbReference type="GO" id="GO:0003735">
    <property type="term" value="F:structural constituent of ribosome"/>
    <property type="evidence" value="ECO:0007669"/>
    <property type="project" value="InterPro"/>
</dbReference>
<dbReference type="GO" id="GO:0006412">
    <property type="term" value="P:translation"/>
    <property type="evidence" value="ECO:0007669"/>
    <property type="project" value="UniProtKB-UniRule"/>
</dbReference>
<dbReference type="HAMAP" id="MF_00251">
    <property type="entry name" value="Ribosomal_bL36"/>
    <property type="match status" value="1"/>
</dbReference>
<dbReference type="InterPro" id="IPR000473">
    <property type="entry name" value="Ribosomal_bL36"/>
</dbReference>
<dbReference type="InterPro" id="IPR035977">
    <property type="entry name" value="Ribosomal_bL36_sp"/>
</dbReference>
<dbReference type="NCBIfam" id="TIGR01022">
    <property type="entry name" value="rpmJ_bact"/>
    <property type="match status" value="1"/>
</dbReference>
<dbReference type="PANTHER" id="PTHR42888">
    <property type="entry name" value="50S RIBOSOMAL PROTEIN L36, CHLOROPLASTIC"/>
    <property type="match status" value="1"/>
</dbReference>
<dbReference type="PANTHER" id="PTHR42888:SF1">
    <property type="entry name" value="LARGE RIBOSOMAL SUBUNIT PROTEIN BL36C"/>
    <property type="match status" value="1"/>
</dbReference>
<dbReference type="Pfam" id="PF00444">
    <property type="entry name" value="Ribosomal_L36"/>
    <property type="match status" value="1"/>
</dbReference>
<dbReference type="SUPFAM" id="SSF57840">
    <property type="entry name" value="Ribosomal protein L36"/>
    <property type="match status" value="1"/>
</dbReference>
<dbReference type="PROSITE" id="PS00828">
    <property type="entry name" value="RIBOSOMAL_L36"/>
    <property type="match status" value="1"/>
</dbReference>
<accession>Q0I141</accession>
<reference key="1">
    <citation type="journal article" date="2007" name="J. Bacteriol.">
        <title>Complete genome sequence of Haemophilus somnus (Histophilus somni) strain 129Pt and comparison to Haemophilus ducreyi 35000HP and Haemophilus influenzae Rd.</title>
        <authorList>
            <person name="Challacombe J.F."/>
            <person name="Duncan A.J."/>
            <person name="Brettin T.S."/>
            <person name="Bruce D."/>
            <person name="Chertkov O."/>
            <person name="Detter J.C."/>
            <person name="Han C.S."/>
            <person name="Misra M."/>
            <person name="Richardson P."/>
            <person name="Tapia R."/>
            <person name="Thayer N."/>
            <person name="Xie G."/>
            <person name="Inzana T.J."/>
        </authorList>
    </citation>
    <scope>NUCLEOTIDE SEQUENCE [LARGE SCALE GENOMIC DNA]</scope>
    <source>
        <strain>129Pt</strain>
    </source>
</reference>
<gene>
    <name evidence="1" type="primary">rpmJ</name>
    <name type="ordered locus">HS_0080.1</name>
    <name type="ORF">HS_0080a</name>
</gene>
<name>RL36_HISS1</name>